<reference key="1">
    <citation type="journal article" date="1999" name="Nature">
        <title>Sequence and analysis of chromosome 4 of the plant Arabidopsis thaliana.</title>
        <authorList>
            <person name="Mayer K.F.X."/>
            <person name="Schueller C."/>
            <person name="Wambutt R."/>
            <person name="Murphy G."/>
            <person name="Volckaert G."/>
            <person name="Pohl T."/>
            <person name="Duesterhoeft A."/>
            <person name="Stiekema W."/>
            <person name="Entian K.-D."/>
            <person name="Terryn N."/>
            <person name="Harris B."/>
            <person name="Ansorge W."/>
            <person name="Brandt P."/>
            <person name="Grivell L.A."/>
            <person name="Rieger M."/>
            <person name="Weichselgartner M."/>
            <person name="de Simone V."/>
            <person name="Obermaier B."/>
            <person name="Mache R."/>
            <person name="Mueller M."/>
            <person name="Kreis M."/>
            <person name="Delseny M."/>
            <person name="Puigdomenech P."/>
            <person name="Watson M."/>
            <person name="Schmidtheini T."/>
            <person name="Reichert B."/>
            <person name="Portetelle D."/>
            <person name="Perez-Alonso M."/>
            <person name="Boutry M."/>
            <person name="Bancroft I."/>
            <person name="Vos P."/>
            <person name="Hoheisel J."/>
            <person name="Zimmermann W."/>
            <person name="Wedler H."/>
            <person name="Ridley P."/>
            <person name="Langham S.-A."/>
            <person name="McCullagh B."/>
            <person name="Bilham L."/>
            <person name="Robben J."/>
            <person name="van der Schueren J."/>
            <person name="Grymonprez B."/>
            <person name="Chuang Y.-J."/>
            <person name="Vandenbussche F."/>
            <person name="Braeken M."/>
            <person name="Weltjens I."/>
            <person name="Voet M."/>
            <person name="Bastiaens I."/>
            <person name="Aert R."/>
            <person name="Defoor E."/>
            <person name="Weitzenegger T."/>
            <person name="Bothe G."/>
            <person name="Ramsperger U."/>
            <person name="Hilbert H."/>
            <person name="Braun M."/>
            <person name="Holzer E."/>
            <person name="Brandt A."/>
            <person name="Peters S."/>
            <person name="van Staveren M."/>
            <person name="Dirkse W."/>
            <person name="Mooijman P."/>
            <person name="Klein Lankhorst R."/>
            <person name="Rose M."/>
            <person name="Hauf J."/>
            <person name="Koetter P."/>
            <person name="Berneiser S."/>
            <person name="Hempel S."/>
            <person name="Feldpausch M."/>
            <person name="Lamberth S."/>
            <person name="Van den Daele H."/>
            <person name="De Keyser A."/>
            <person name="Buysshaert C."/>
            <person name="Gielen J."/>
            <person name="Villarroel R."/>
            <person name="De Clercq R."/>
            <person name="van Montagu M."/>
            <person name="Rogers J."/>
            <person name="Cronin A."/>
            <person name="Quail M.A."/>
            <person name="Bray-Allen S."/>
            <person name="Clark L."/>
            <person name="Doggett J."/>
            <person name="Hall S."/>
            <person name="Kay M."/>
            <person name="Lennard N."/>
            <person name="McLay K."/>
            <person name="Mayes R."/>
            <person name="Pettett A."/>
            <person name="Rajandream M.A."/>
            <person name="Lyne M."/>
            <person name="Benes V."/>
            <person name="Rechmann S."/>
            <person name="Borkova D."/>
            <person name="Bloecker H."/>
            <person name="Scharfe M."/>
            <person name="Grimm M."/>
            <person name="Loehnert T.-H."/>
            <person name="Dose S."/>
            <person name="de Haan M."/>
            <person name="Maarse A.C."/>
            <person name="Schaefer M."/>
            <person name="Mueller-Auer S."/>
            <person name="Gabel C."/>
            <person name="Fuchs M."/>
            <person name="Fartmann B."/>
            <person name="Granderath K."/>
            <person name="Dauner D."/>
            <person name="Herzl A."/>
            <person name="Neumann S."/>
            <person name="Argiriou A."/>
            <person name="Vitale D."/>
            <person name="Liguori R."/>
            <person name="Piravandi E."/>
            <person name="Massenet O."/>
            <person name="Quigley F."/>
            <person name="Clabauld G."/>
            <person name="Muendlein A."/>
            <person name="Felber R."/>
            <person name="Schnabl S."/>
            <person name="Hiller R."/>
            <person name="Schmidt W."/>
            <person name="Lecharny A."/>
            <person name="Aubourg S."/>
            <person name="Chefdor F."/>
            <person name="Cooke R."/>
            <person name="Berger C."/>
            <person name="Monfort A."/>
            <person name="Casacuberta E."/>
            <person name="Gibbons T."/>
            <person name="Weber N."/>
            <person name="Vandenbol M."/>
            <person name="Bargues M."/>
            <person name="Terol J."/>
            <person name="Torres A."/>
            <person name="Perez-Perez A."/>
            <person name="Purnelle B."/>
            <person name="Bent E."/>
            <person name="Johnson S."/>
            <person name="Tacon D."/>
            <person name="Jesse T."/>
            <person name="Heijnen L."/>
            <person name="Schwarz S."/>
            <person name="Scholler P."/>
            <person name="Heber S."/>
            <person name="Francs P."/>
            <person name="Bielke C."/>
            <person name="Frishman D."/>
            <person name="Haase D."/>
            <person name="Lemcke K."/>
            <person name="Mewes H.-W."/>
            <person name="Stocker S."/>
            <person name="Zaccaria P."/>
            <person name="Bevan M."/>
            <person name="Wilson R.K."/>
            <person name="de la Bastide M."/>
            <person name="Habermann K."/>
            <person name="Parnell L."/>
            <person name="Dedhia N."/>
            <person name="Gnoj L."/>
            <person name="Schutz K."/>
            <person name="Huang E."/>
            <person name="Spiegel L."/>
            <person name="Sekhon M."/>
            <person name="Murray J."/>
            <person name="Sheet P."/>
            <person name="Cordes M."/>
            <person name="Abu-Threideh J."/>
            <person name="Stoneking T."/>
            <person name="Kalicki J."/>
            <person name="Graves T."/>
            <person name="Harmon G."/>
            <person name="Edwards J."/>
            <person name="Latreille P."/>
            <person name="Courtney L."/>
            <person name="Cloud J."/>
            <person name="Abbott A."/>
            <person name="Scott K."/>
            <person name="Johnson D."/>
            <person name="Minx P."/>
            <person name="Bentley D."/>
            <person name="Fulton B."/>
            <person name="Miller N."/>
            <person name="Greco T."/>
            <person name="Kemp K."/>
            <person name="Kramer J."/>
            <person name="Fulton L."/>
            <person name="Mardis E."/>
            <person name="Dante M."/>
            <person name="Pepin K."/>
            <person name="Hillier L.W."/>
            <person name="Nelson J."/>
            <person name="Spieth J."/>
            <person name="Ryan E."/>
            <person name="Andrews S."/>
            <person name="Geisel C."/>
            <person name="Layman D."/>
            <person name="Du H."/>
            <person name="Ali J."/>
            <person name="Berghoff A."/>
            <person name="Jones K."/>
            <person name="Drone K."/>
            <person name="Cotton M."/>
            <person name="Joshu C."/>
            <person name="Antonoiu B."/>
            <person name="Zidanic M."/>
            <person name="Strong C."/>
            <person name="Sun H."/>
            <person name="Lamar B."/>
            <person name="Yordan C."/>
            <person name="Ma P."/>
            <person name="Zhong J."/>
            <person name="Preston R."/>
            <person name="Vil D."/>
            <person name="Shekher M."/>
            <person name="Matero A."/>
            <person name="Shah R."/>
            <person name="Swaby I.K."/>
            <person name="O'Shaughnessy A."/>
            <person name="Rodriguez M."/>
            <person name="Hoffman J."/>
            <person name="Till S."/>
            <person name="Granat S."/>
            <person name="Shohdy N."/>
            <person name="Hasegawa A."/>
            <person name="Hameed A."/>
            <person name="Lodhi M."/>
            <person name="Johnson A."/>
            <person name="Chen E."/>
            <person name="Marra M.A."/>
            <person name="Martienssen R."/>
            <person name="McCombie W.R."/>
        </authorList>
    </citation>
    <scope>NUCLEOTIDE SEQUENCE [LARGE SCALE GENOMIC DNA]</scope>
    <source>
        <strain>cv. Columbia</strain>
    </source>
</reference>
<reference key="2">
    <citation type="journal article" date="2017" name="Plant J.">
        <title>Araport11: a complete reannotation of the Arabidopsis thaliana reference genome.</title>
        <authorList>
            <person name="Cheng C.Y."/>
            <person name="Krishnakumar V."/>
            <person name="Chan A.P."/>
            <person name="Thibaud-Nissen F."/>
            <person name="Schobel S."/>
            <person name="Town C.D."/>
        </authorList>
    </citation>
    <scope>GENOME REANNOTATION</scope>
    <source>
        <strain>cv. Columbia</strain>
    </source>
</reference>
<reference key="3">
    <citation type="submission" date="2005-03" db="EMBL/GenBank/DDBJ databases">
        <title>Large-scale analysis of RIKEN Arabidopsis full-length (RAFL) cDNAs.</title>
        <authorList>
            <person name="Totoki Y."/>
            <person name="Seki M."/>
            <person name="Ishida J."/>
            <person name="Nakajima M."/>
            <person name="Enju A."/>
            <person name="Kamiya A."/>
            <person name="Narusaka M."/>
            <person name="Shin-i T."/>
            <person name="Nakagawa M."/>
            <person name="Sakamoto N."/>
            <person name="Oishi K."/>
            <person name="Kohara Y."/>
            <person name="Kobayashi M."/>
            <person name="Toyoda A."/>
            <person name="Sakaki Y."/>
            <person name="Sakurai T."/>
            <person name="Iida K."/>
            <person name="Akiyama K."/>
            <person name="Satou M."/>
            <person name="Toyoda T."/>
            <person name="Konagaya A."/>
            <person name="Carninci P."/>
            <person name="Kawai J."/>
            <person name="Hayashizaki Y."/>
            <person name="Shinozaki K."/>
        </authorList>
    </citation>
    <scope>NUCLEOTIDE SEQUENCE [LARGE SCALE MRNA] (ISOFORM 2)</scope>
    <source>
        <strain>cv. Columbia</strain>
    </source>
</reference>
<reference key="4">
    <citation type="journal article" date="2005" name="Plant Physiol.">
        <title>Genome organization of more than 300 defensin-like genes in Arabidopsis.</title>
        <authorList>
            <person name="Silverstein K.A.T."/>
            <person name="Graham M.A."/>
            <person name="Paape T.D."/>
            <person name="VandenBosch K.A."/>
        </authorList>
    </citation>
    <scope>GENE FAMILY</scope>
</reference>
<accession>Q56XC2</accession>
<accession>F4JSA4</accession>
<accession>Q9SVQ4</accession>
<organism>
    <name type="scientific">Arabidopsis thaliana</name>
    <name type="common">Mouse-ear cress</name>
    <dbReference type="NCBI Taxonomy" id="3702"/>
    <lineage>
        <taxon>Eukaryota</taxon>
        <taxon>Viridiplantae</taxon>
        <taxon>Streptophyta</taxon>
        <taxon>Embryophyta</taxon>
        <taxon>Tracheophyta</taxon>
        <taxon>Spermatophyta</taxon>
        <taxon>Magnoliopsida</taxon>
        <taxon>eudicotyledons</taxon>
        <taxon>Gunneridae</taxon>
        <taxon>Pentapetalae</taxon>
        <taxon>rosids</taxon>
        <taxon>malvids</taxon>
        <taxon>Brassicales</taxon>
        <taxon>Brassicaceae</taxon>
        <taxon>Camelineae</taxon>
        <taxon>Arabidopsis</taxon>
    </lineage>
</organism>
<sequence length="84" mass="9372">MAVKLIYLFLFLYIALLISGRTMSTTAGRRDGKSGRTEWLYVAGECAKLPRCNKYCVSNGFHLGGFCEKLSPQASYLSCVCKYT</sequence>
<keyword id="KW-0025">Alternative splicing</keyword>
<keyword id="KW-0929">Antimicrobial</keyword>
<keyword id="KW-1015">Disulfide bond</keyword>
<keyword id="KW-0295">Fungicide</keyword>
<keyword id="KW-0611">Plant defense</keyword>
<keyword id="KW-1185">Reference proteome</keyword>
<keyword id="KW-0964">Secreted</keyword>
<keyword id="KW-0732">Signal</keyword>
<name>DEF37_ARATH</name>
<proteinExistence type="inferred from homology"/>
<protein>
    <recommendedName>
        <fullName>Defensin-like protein 37</fullName>
    </recommendedName>
    <alternativeName>
        <fullName>Protein EMBRYO SAC DEVELOPMENT ARREST 21</fullName>
    </alternativeName>
</protein>
<gene>
    <name type="primary">EDA21</name>
    <name type="ordered locus">At4g13235</name>
    <name type="ORF">F17N18.120</name>
</gene>
<comment type="subcellular location">
    <subcellularLocation>
        <location evidence="1">Secreted</location>
    </subcellularLocation>
</comment>
<comment type="alternative products">
    <event type="alternative splicing"/>
    <isoform>
        <id>Q56XC2-1</id>
        <name>1</name>
        <sequence type="displayed"/>
    </isoform>
    <isoform>
        <id>Q56XC2-2</id>
        <name>2</name>
        <sequence type="described" ref="VSP_037703"/>
    </isoform>
</comment>
<comment type="miscellaneous">
    <molecule>Isoform 2</molecule>
    <text evidence="4">May be due to intron retention.</text>
</comment>
<comment type="similarity">
    <text evidence="4">Belongs to the DEFL family.</text>
</comment>
<comment type="caution">
    <text evidence="4">Lacks 1 of the 4 disulfide bonds, which are conserved features of the family.</text>
</comment>
<comment type="sequence caution" evidence="4">
    <conflict type="erroneous gene model prediction">
        <sequence resource="EMBL-CDS" id="AEE83249"/>
    </conflict>
</comment>
<comment type="sequence caution" evidence="4">
    <conflict type="erroneous translation">
        <sequence resource="EMBL-CDS" id="BAD93811"/>
    </conflict>
    <text>Wrong choice of frame.</text>
</comment>
<comment type="sequence caution" evidence="4">
    <conflict type="erroneous gene model prediction">
        <sequence resource="EMBL-CDS" id="CAB41933"/>
    </conflict>
    <text>The predicted gene has been split into 2 genes: At4g13230 and At4g13235.</text>
</comment>
<comment type="sequence caution" evidence="4">
    <conflict type="erroneous gene model prediction">
        <sequence resource="EMBL-CDS" id="CAB78365"/>
    </conflict>
    <text>The predicted gene has been split into 2 genes: At4g13230 and At4g13235.</text>
</comment>
<feature type="signal peptide" evidence="2">
    <location>
        <begin position="1"/>
        <end position="24"/>
    </location>
</feature>
<feature type="chain" id="PRO_0000379619" description="Defensin-like protein 37">
    <location>
        <begin position="25"/>
        <end position="84"/>
    </location>
</feature>
<feature type="disulfide bond" evidence="1">
    <location>
        <begin position="46"/>
        <end position="67"/>
    </location>
</feature>
<feature type="disulfide bond" evidence="1">
    <location>
        <begin position="52"/>
        <end position="79"/>
    </location>
</feature>
<feature type="disulfide bond" evidence="1">
    <location>
        <begin position="56"/>
        <end position="81"/>
    </location>
</feature>
<feature type="splice variant" id="VSP_037703" description="In isoform 2." evidence="3">
    <original>VKLIYLFLFLYIALLIS</original>
    <variation>TTP</variation>
    <location>
        <begin position="3"/>
        <end position="19"/>
    </location>
</feature>
<dbReference type="EMBL" id="AL049751">
    <property type="protein sequence ID" value="CAB41933.1"/>
    <property type="status" value="ALT_SEQ"/>
    <property type="molecule type" value="Genomic_DNA"/>
</dbReference>
<dbReference type="EMBL" id="AL161535">
    <property type="protein sequence ID" value="CAB78365.1"/>
    <property type="status" value="ALT_SEQ"/>
    <property type="molecule type" value="Genomic_DNA"/>
</dbReference>
<dbReference type="EMBL" id="CP002687">
    <property type="protein sequence ID" value="AEE83249.1"/>
    <property type="status" value="ALT_SEQ"/>
    <property type="molecule type" value="Genomic_DNA"/>
</dbReference>
<dbReference type="EMBL" id="AK221753">
    <property type="protein sequence ID" value="BAD93811.1"/>
    <property type="status" value="ALT_SEQ"/>
    <property type="molecule type" value="mRNA"/>
</dbReference>
<dbReference type="PIR" id="T07703">
    <property type="entry name" value="T07703"/>
</dbReference>
<dbReference type="RefSeq" id="NP_567399.3">
    <property type="nucleotide sequence ID" value="NM_117394.4"/>
</dbReference>
<dbReference type="SMR" id="Q56XC2"/>
<dbReference type="PaxDb" id="3702-AT4G13235.1"/>
<dbReference type="ProteomicsDB" id="224179">
    <molecule id="Q56XC2-1"/>
</dbReference>
<dbReference type="GeneID" id="826940"/>
<dbReference type="KEGG" id="ath:AT4G13235"/>
<dbReference type="Araport" id="AT4G13235"/>
<dbReference type="TAIR" id="AT4G13235">
    <property type="gene designation" value="EDA21"/>
</dbReference>
<dbReference type="HOGENOM" id="CLU_2430097_0_0_1"/>
<dbReference type="InParanoid" id="Q56XC2"/>
<dbReference type="OrthoDB" id="1054699at2759"/>
<dbReference type="PRO" id="PR:Q56XC2"/>
<dbReference type="Proteomes" id="UP000006548">
    <property type="component" value="Chromosome 4"/>
</dbReference>
<dbReference type="ExpressionAtlas" id="Q56XC2">
    <property type="expression patterns" value="baseline and differential"/>
</dbReference>
<dbReference type="GO" id="GO:0005576">
    <property type="term" value="C:extracellular region"/>
    <property type="evidence" value="ECO:0007669"/>
    <property type="project" value="UniProtKB-SubCell"/>
</dbReference>
<dbReference type="GO" id="GO:0050832">
    <property type="term" value="P:defense response to fungus"/>
    <property type="evidence" value="ECO:0007669"/>
    <property type="project" value="UniProtKB-KW"/>
</dbReference>
<dbReference type="GO" id="GO:0031640">
    <property type="term" value="P:killing of cells of another organism"/>
    <property type="evidence" value="ECO:0007669"/>
    <property type="project" value="UniProtKB-KW"/>
</dbReference>
<dbReference type="Gene3D" id="3.30.30.10">
    <property type="entry name" value="Knottin, scorpion toxin-like"/>
    <property type="match status" value="1"/>
</dbReference>
<dbReference type="InterPro" id="IPR036574">
    <property type="entry name" value="Scorpion_toxin-like_sf"/>
</dbReference>
<evidence type="ECO:0000250" key="1"/>
<evidence type="ECO:0000255" key="2"/>
<evidence type="ECO:0000303" key="3">
    <source ref="3"/>
</evidence>
<evidence type="ECO:0000305" key="4"/>